<comment type="subcellular location">
    <subcellularLocation>
        <location evidence="2">Membrane</location>
        <topology evidence="2">Multi-pass membrane protein</topology>
    </subcellularLocation>
</comment>
<comment type="miscellaneous">
    <text evidence="2">Completely overlaps MET28.</text>
</comment>
<comment type="caution">
    <text evidence="3">Product of a dubious gene prediction unlikely to encode a functional protein. Because of that it is not part of the S.cerevisiae S288c complete/reference proteome set.</text>
</comment>
<comment type="sequence caution" evidence="2">
    <conflict type="erroneous initiation">
        <sequence resource="EMBL-CDS" id="AAC49427"/>
    </conflict>
</comment>
<dbReference type="EMBL" id="U17015">
    <property type="protein sequence ID" value="AAC49427.1"/>
    <property type="status" value="ALT_INIT"/>
    <property type="molecule type" value="Genomic_DNA"/>
</dbReference>
<dbReference type="EMBL" id="Z37996">
    <property type="protein sequence ID" value="CAA86088.1"/>
    <property type="molecule type" value="Genomic_DNA"/>
</dbReference>
<dbReference type="PIR" id="S48362">
    <property type="entry name" value="S48362"/>
</dbReference>
<dbReference type="PaxDb" id="4932-YIR017W-A"/>
<dbReference type="EnsemblFungi" id="YIR017W-A_mRNA">
    <property type="protein sequence ID" value="YIR017W-A"/>
    <property type="gene ID" value="YIR017W-A"/>
</dbReference>
<dbReference type="AGR" id="SGD:S000028799"/>
<dbReference type="SGD" id="S000028799">
    <property type="gene designation" value="YIR017W-A"/>
</dbReference>
<dbReference type="HOGENOM" id="CLU_1372911_0_0_1"/>
<dbReference type="GO" id="GO:0016020">
    <property type="term" value="C:membrane"/>
    <property type="evidence" value="ECO:0007669"/>
    <property type="project" value="UniProtKB-SubCell"/>
</dbReference>
<feature type="chain" id="PRO_0000299759" description="Putative uncharacterized protein YIR017W-A">
    <location>
        <begin position="1"/>
        <end position="199"/>
    </location>
</feature>
<feature type="transmembrane region" description="Helical" evidence="1">
    <location>
        <begin position="40"/>
        <end position="60"/>
    </location>
</feature>
<feature type="transmembrane region" description="Helical" evidence="1">
    <location>
        <begin position="86"/>
        <end position="106"/>
    </location>
</feature>
<feature type="transmembrane region" description="Helical" evidence="1">
    <location>
        <begin position="117"/>
        <end position="137"/>
    </location>
</feature>
<feature type="transmembrane region" description="Helical" evidence="1">
    <location>
        <begin position="166"/>
        <end position="186"/>
    </location>
</feature>
<feature type="sequence conflict" description="In Ref. 1; AAC49427." evidence="2" ref="1">
    <original>I</original>
    <variation>V</variation>
    <location>
        <position position="185"/>
    </location>
</feature>
<feature type="sequence conflict" description="In Ref. 1; AAC49427." evidence="2" ref="1">
    <location>
        <begin position="198"/>
        <end position="199"/>
    </location>
</feature>
<evidence type="ECO:0000255" key="1"/>
<evidence type="ECO:0000305" key="2"/>
<evidence type="ECO:0000305" key="3">
    <source>
    </source>
</evidence>
<organism>
    <name type="scientific">Saccharomyces cerevisiae (strain ATCC 204508 / S288c)</name>
    <name type="common">Baker's yeast</name>
    <dbReference type="NCBI Taxonomy" id="559292"/>
    <lineage>
        <taxon>Eukaryota</taxon>
        <taxon>Fungi</taxon>
        <taxon>Dikarya</taxon>
        <taxon>Ascomycota</taxon>
        <taxon>Saccharomycotina</taxon>
        <taxon>Saccharomycetes</taxon>
        <taxon>Saccharomycetales</taxon>
        <taxon>Saccharomycetaceae</taxon>
        <taxon>Saccharomyces</taxon>
    </lineage>
</organism>
<protein>
    <recommendedName>
        <fullName>Putative uncharacterized protein YIR017W-A</fullName>
    </recommendedName>
</protein>
<gene>
    <name type="ordered locus">YIR017W-A</name>
</gene>
<reference key="1">
    <citation type="journal article" date="1996" name="EMBO J.">
        <title>A heteromeric complex containing the centromere binding factor 1 and two basic leucine zipper factors, Met4 and Met28, mediates the transcription activation of yeast sulfur metabolism.</title>
        <authorList>
            <person name="Kuras L."/>
            <person name="Cherest H."/>
            <person name="Surdin-Kerjan Y."/>
            <person name="Thomas D."/>
        </authorList>
    </citation>
    <scope>NUCLEOTIDE SEQUENCE [GENOMIC DNA]</scope>
    <source>
        <strain>ATCC 28383 / FL100 / VTT C-80102</strain>
    </source>
</reference>
<reference key="2">
    <citation type="journal article" date="1997" name="Nature">
        <title>The nucleotide sequence of Saccharomyces cerevisiae chromosome IX.</title>
        <authorList>
            <person name="Churcher C.M."/>
            <person name="Bowman S."/>
            <person name="Badcock K."/>
            <person name="Bankier A.T."/>
            <person name="Brown D."/>
            <person name="Chillingworth T."/>
            <person name="Connor R."/>
            <person name="Devlin K."/>
            <person name="Gentles S."/>
            <person name="Hamlin N."/>
            <person name="Harris D.E."/>
            <person name="Horsnell T."/>
            <person name="Hunt S."/>
            <person name="Jagels K."/>
            <person name="Jones M."/>
            <person name="Lye G."/>
            <person name="Moule S."/>
            <person name="Odell C."/>
            <person name="Pearson D."/>
            <person name="Rajandream M.A."/>
            <person name="Rice P."/>
            <person name="Rowley N."/>
            <person name="Skelton J."/>
            <person name="Smith V."/>
            <person name="Walsh S.V."/>
            <person name="Whitehead S."/>
            <person name="Barrell B.G."/>
        </authorList>
    </citation>
    <scope>NUCLEOTIDE SEQUENCE [LARGE SCALE GENOMIC DNA]</scope>
    <source>
        <strain>ATCC 204508 / S288c</strain>
    </source>
</reference>
<reference key="3">
    <citation type="journal article" date="2014" name="G3 (Bethesda)">
        <title>The reference genome sequence of Saccharomyces cerevisiae: Then and now.</title>
        <authorList>
            <person name="Engel S.R."/>
            <person name="Dietrich F.S."/>
            <person name="Fisk D.G."/>
            <person name="Binkley G."/>
            <person name="Balakrishnan R."/>
            <person name="Costanzo M.C."/>
            <person name="Dwight S.S."/>
            <person name="Hitz B.C."/>
            <person name="Karra K."/>
            <person name="Nash R.S."/>
            <person name="Weng S."/>
            <person name="Wong E.D."/>
            <person name="Lloyd P."/>
            <person name="Skrzypek M.S."/>
            <person name="Miyasato S.R."/>
            <person name="Simison M."/>
            <person name="Cherry J.M."/>
        </authorList>
    </citation>
    <scope>GENOME REANNOTATION</scope>
    <source>
        <strain>ATCC 204508 / S288c</strain>
    </source>
</reference>
<accession>Q03885</accession>
<accession>Q02489</accession>
<proteinExistence type="uncertain"/>
<keyword id="KW-0472">Membrane</keyword>
<keyword id="KW-0812">Transmembrane</keyword>
<keyword id="KW-1133">Transmembrane helix</keyword>
<name>YI017_YEAST</name>
<sequence length="199" mass="22888">MFRLLMSFNNFKDLISLMSLSFAFQNSFSLFNCSIRSRSLLICVFKFCSLFMFSKFFCFLRMRNRCDASVFFLLRSCLILSSSLEVLTGASSSFTTTAVVAATFPFLGSRSFLNCETSWPLFIMLMSSSALPLLTSSNDSKREPSSESLDIRFCRCSERLFTFIPFLLAMSMFVDFFSHPCFALILTNKTICLRNYHWL</sequence>